<accession>B6DD06</accession>
<proteinExistence type="evidence at transcript level"/>
<protein>
    <recommendedName>
        <fullName>U10-lycotoxin-Ls1d</fullName>
    </recommendedName>
    <alternativeName>
        <fullName>Toxin-like structure LSTX-J4</fullName>
    </alternativeName>
</protein>
<comment type="subcellular location">
    <subcellularLocation>
        <location evidence="1">Secreted</location>
    </subcellularLocation>
</comment>
<comment type="tissue specificity">
    <text>Expressed by the venom gland.</text>
</comment>
<comment type="PTM">
    <text evidence="1">Contains 4 disulfide bonds.</text>
</comment>
<comment type="similarity">
    <text evidence="3">Belongs to the neurotoxin 19 (CSTX) family. 09 (U10-Lctx) subfamily.</text>
</comment>
<sequence length="77" mass="8731">MKLIIFTGLFLFAIVSLIEAEEESGRVCIPLNGECSKSPNKCCDNINCDCYLRFEKGVQTGRPCFCTEKDVIFERDE</sequence>
<name>TXA04_LYCSI</name>
<feature type="signal peptide" evidence="2">
    <location>
        <begin position="1"/>
        <end position="20"/>
    </location>
</feature>
<feature type="propeptide" id="PRO_0000401829" evidence="1">
    <location>
        <begin position="21"/>
        <end position="26"/>
    </location>
</feature>
<feature type="chain" id="PRO_0000401830" description="U10-lycotoxin-Ls1d">
    <location>
        <begin position="27"/>
        <end position="77"/>
    </location>
</feature>
<reference key="1">
    <citation type="journal article" date="2010" name="Zoology">
        <title>Transcriptome analysis of the venom glands of the Chinese wolf spider Lycosa singoriensis.</title>
        <authorList>
            <person name="Zhang Y."/>
            <person name="Chen J."/>
            <person name="Tang X."/>
            <person name="Wang F."/>
            <person name="Jiang L."/>
            <person name="Xiong X."/>
            <person name="Wang M."/>
            <person name="Rong M."/>
            <person name="Liu Z."/>
            <person name="Liang S."/>
        </authorList>
    </citation>
    <scope>NUCLEOTIDE SEQUENCE [LARGE SCALE MRNA]</scope>
    <source>
        <tissue>Venom gland</tissue>
    </source>
</reference>
<evidence type="ECO:0000250" key="1"/>
<evidence type="ECO:0000255" key="2"/>
<evidence type="ECO:0000305" key="3"/>
<keyword id="KW-1015">Disulfide bond</keyword>
<keyword id="KW-0964">Secreted</keyword>
<keyword id="KW-0732">Signal</keyword>
<keyword id="KW-0800">Toxin</keyword>
<organism>
    <name type="scientific">Lycosa singoriensis</name>
    <name type="common">Wolf spider</name>
    <name type="synonym">Aranea singoriensis</name>
    <dbReference type="NCBI Taxonomy" id="434756"/>
    <lineage>
        <taxon>Eukaryota</taxon>
        <taxon>Metazoa</taxon>
        <taxon>Ecdysozoa</taxon>
        <taxon>Arthropoda</taxon>
        <taxon>Chelicerata</taxon>
        <taxon>Arachnida</taxon>
        <taxon>Araneae</taxon>
        <taxon>Araneomorphae</taxon>
        <taxon>Entelegynae</taxon>
        <taxon>Lycosoidea</taxon>
        <taxon>Lycosidae</taxon>
        <taxon>Lycosa</taxon>
    </lineage>
</organism>
<dbReference type="EMBL" id="EU926090">
    <property type="protein sequence ID" value="ACI41422.1"/>
    <property type="molecule type" value="mRNA"/>
</dbReference>
<dbReference type="EMBL" id="FM864094">
    <property type="protein sequence ID" value="CAS03691.1"/>
    <property type="molecule type" value="mRNA"/>
</dbReference>
<dbReference type="SMR" id="B6DD06"/>
<dbReference type="ArachnoServer" id="AS001029">
    <property type="toxin name" value="U10-lycotoxin-Ls1d"/>
</dbReference>
<dbReference type="GO" id="GO:0005576">
    <property type="term" value="C:extracellular region"/>
    <property type="evidence" value="ECO:0007669"/>
    <property type="project" value="UniProtKB-SubCell"/>
</dbReference>
<dbReference type="GO" id="GO:0008200">
    <property type="term" value="F:ion channel inhibitor activity"/>
    <property type="evidence" value="ECO:0007669"/>
    <property type="project" value="InterPro"/>
</dbReference>
<dbReference type="GO" id="GO:0090729">
    <property type="term" value="F:toxin activity"/>
    <property type="evidence" value="ECO:0007669"/>
    <property type="project" value="UniProtKB-KW"/>
</dbReference>
<dbReference type="CDD" id="cd12960">
    <property type="entry name" value="Spider_toxin"/>
    <property type="match status" value="1"/>
</dbReference>
<dbReference type="InterPro" id="IPR019553">
    <property type="entry name" value="Spider_toxin_CSTX_knottin"/>
</dbReference>
<dbReference type="InterPro" id="IPR004169">
    <property type="entry name" value="Spidertoxin"/>
</dbReference>
<dbReference type="Pfam" id="PF10530">
    <property type="entry name" value="Toxin_35"/>
    <property type="match status" value="1"/>
</dbReference>